<keyword id="KW-0028">Amino-acid biosynthesis</keyword>
<keyword id="KW-0963">Cytoplasm</keyword>
<keyword id="KW-0413">Isomerase</keyword>
<keyword id="KW-0457">Lysine biosynthesis</keyword>
<keyword id="KW-1185">Reference proteome</keyword>
<comment type="function">
    <text evidence="1">Catalyzes the stereoinversion of LL-2,6-diaminopimelate (L,L-DAP) to meso-diaminopimelate (meso-DAP), a precursor of L-lysine and an essential component of the bacterial peptidoglycan.</text>
</comment>
<comment type="catalytic activity">
    <reaction evidence="1">
        <text>(2S,6S)-2,6-diaminopimelate = meso-2,6-diaminopimelate</text>
        <dbReference type="Rhea" id="RHEA:15393"/>
        <dbReference type="ChEBI" id="CHEBI:57609"/>
        <dbReference type="ChEBI" id="CHEBI:57791"/>
        <dbReference type="EC" id="5.1.1.7"/>
    </reaction>
</comment>
<comment type="pathway">
    <text evidence="1">Amino-acid biosynthesis; L-lysine biosynthesis via DAP pathway; DL-2,6-diaminopimelate from LL-2,6-diaminopimelate: step 1/1.</text>
</comment>
<comment type="subunit">
    <text evidence="1">Homodimer.</text>
</comment>
<comment type="subcellular location">
    <subcellularLocation>
        <location evidence="1">Cytoplasm</location>
    </subcellularLocation>
</comment>
<comment type="similarity">
    <text evidence="1">Belongs to the diaminopimelate epimerase family.</text>
</comment>
<comment type="sequence caution" evidence="2">
    <conflict type="erroneous initiation">
        <sequence resource="EMBL-CDS" id="BAB73747"/>
    </conflict>
    <text>Truncated N-terminus.</text>
</comment>
<organism>
    <name type="scientific">Nostoc sp. (strain PCC 7120 / SAG 25.82 / UTEX 2576)</name>
    <dbReference type="NCBI Taxonomy" id="103690"/>
    <lineage>
        <taxon>Bacteria</taxon>
        <taxon>Bacillati</taxon>
        <taxon>Cyanobacteriota</taxon>
        <taxon>Cyanophyceae</taxon>
        <taxon>Nostocales</taxon>
        <taxon>Nostocaceae</taxon>
        <taxon>Nostoc</taxon>
    </lineage>
</organism>
<proteinExistence type="inferred from homology"/>
<accession>Q8YVD0</accession>
<gene>
    <name evidence="1" type="primary">dapF1</name>
    <name type="ordered locus">alr2048</name>
</gene>
<dbReference type="EC" id="5.1.1.7" evidence="1"/>
<dbReference type="EMBL" id="BA000019">
    <property type="protein sequence ID" value="BAB73747.1"/>
    <property type="status" value="ALT_INIT"/>
    <property type="molecule type" value="Genomic_DNA"/>
</dbReference>
<dbReference type="PIR" id="AB2062">
    <property type="entry name" value="AB2062"/>
</dbReference>
<dbReference type="SMR" id="Q8YVD0"/>
<dbReference type="STRING" id="103690.gene:10494072"/>
<dbReference type="KEGG" id="ana:alr2048"/>
<dbReference type="eggNOG" id="COG0253">
    <property type="taxonomic scope" value="Bacteria"/>
</dbReference>
<dbReference type="OrthoDB" id="9805408at2"/>
<dbReference type="UniPathway" id="UPA00034">
    <property type="reaction ID" value="UER00025"/>
</dbReference>
<dbReference type="Proteomes" id="UP000002483">
    <property type="component" value="Chromosome"/>
</dbReference>
<dbReference type="GO" id="GO:0005829">
    <property type="term" value="C:cytosol"/>
    <property type="evidence" value="ECO:0007669"/>
    <property type="project" value="TreeGrafter"/>
</dbReference>
<dbReference type="GO" id="GO:0008837">
    <property type="term" value="F:diaminopimelate epimerase activity"/>
    <property type="evidence" value="ECO:0007669"/>
    <property type="project" value="UniProtKB-UniRule"/>
</dbReference>
<dbReference type="GO" id="GO:0009089">
    <property type="term" value="P:lysine biosynthetic process via diaminopimelate"/>
    <property type="evidence" value="ECO:0007669"/>
    <property type="project" value="UniProtKB-UniRule"/>
</dbReference>
<dbReference type="FunFam" id="3.10.310.10:FF:000009">
    <property type="entry name" value="Diaminopimelate epimerase chloroplastic"/>
    <property type="match status" value="1"/>
</dbReference>
<dbReference type="FunFam" id="3.10.310.10:FF:000011">
    <property type="entry name" value="Diaminopimelate epimerase, chloroplastic"/>
    <property type="match status" value="1"/>
</dbReference>
<dbReference type="Gene3D" id="3.10.310.10">
    <property type="entry name" value="Diaminopimelate Epimerase, Chain A, domain 1"/>
    <property type="match status" value="2"/>
</dbReference>
<dbReference type="HAMAP" id="MF_00197">
    <property type="entry name" value="DAP_epimerase"/>
    <property type="match status" value="1"/>
</dbReference>
<dbReference type="InterPro" id="IPR018510">
    <property type="entry name" value="DAP_epimerase_AS"/>
</dbReference>
<dbReference type="InterPro" id="IPR001653">
    <property type="entry name" value="DAP_epimerase_DapF"/>
</dbReference>
<dbReference type="NCBIfam" id="TIGR00652">
    <property type="entry name" value="DapF"/>
    <property type="match status" value="1"/>
</dbReference>
<dbReference type="PANTHER" id="PTHR31689:SF0">
    <property type="entry name" value="DIAMINOPIMELATE EPIMERASE"/>
    <property type="match status" value="1"/>
</dbReference>
<dbReference type="PANTHER" id="PTHR31689">
    <property type="entry name" value="DIAMINOPIMELATE EPIMERASE, CHLOROPLASTIC"/>
    <property type="match status" value="1"/>
</dbReference>
<dbReference type="Pfam" id="PF01678">
    <property type="entry name" value="DAP_epimerase"/>
    <property type="match status" value="2"/>
</dbReference>
<dbReference type="SUPFAM" id="SSF54506">
    <property type="entry name" value="Diaminopimelate epimerase-like"/>
    <property type="match status" value="2"/>
</dbReference>
<dbReference type="PROSITE" id="PS01326">
    <property type="entry name" value="DAP_EPIMERASE"/>
    <property type="match status" value="1"/>
</dbReference>
<protein>
    <recommendedName>
        <fullName evidence="1">Diaminopimelate epimerase 1</fullName>
        <shortName evidence="1">DAP epimerase 1</shortName>
        <ecNumber evidence="1">5.1.1.7</ecNumber>
    </recommendedName>
    <alternativeName>
        <fullName evidence="1">PLP-independent amino acid racemase 1</fullName>
    </alternativeName>
</protein>
<sequence length="279" mass="30233">MAIEFTKYHGLGNDFILIDNRASKTPAITPEKAVEMCDRHFGIGADGVIFALPGENGTDYTMRIFNSDGSEPEMCGNGIRCLAAFLADLEGLSRNKDTYRIHTLAGVITPQLTPDGQIKVDMGLPRLLAGEIPTTLGAADGKVINQPLEVEGQTWEVTCVSMGNPHCITFVEDVAAIPLEIIGPKFEHHPAFPQRTNTEFIQVVSRDYLKMRVWERGAGITLACGTGACASLVAAVLTGRSDRLATVELPGGPLEIEWSEVDQRIYMTGPADRVFTGKL</sequence>
<evidence type="ECO:0000255" key="1">
    <source>
        <dbReference type="HAMAP-Rule" id="MF_00197"/>
    </source>
</evidence>
<evidence type="ECO:0000305" key="2"/>
<feature type="chain" id="PRO_0000149817" description="Diaminopimelate epimerase 1">
    <location>
        <begin position="1"/>
        <end position="279"/>
    </location>
</feature>
<feature type="active site" description="Proton donor" evidence="1">
    <location>
        <position position="75"/>
    </location>
</feature>
<feature type="active site" description="Proton acceptor" evidence="1">
    <location>
        <position position="224"/>
    </location>
</feature>
<feature type="binding site" evidence="1">
    <location>
        <position position="13"/>
    </location>
    <ligand>
        <name>substrate</name>
    </ligand>
</feature>
<feature type="binding site" evidence="1">
    <location>
        <position position="66"/>
    </location>
    <ligand>
        <name>substrate</name>
    </ligand>
</feature>
<feature type="binding site" evidence="1">
    <location>
        <begin position="76"/>
        <end position="77"/>
    </location>
    <ligand>
        <name>substrate</name>
    </ligand>
</feature>
<feature type="binding site" evidence="1">
    <location>
        <position position="164"/>
    </location>
    <ligand>
        <name>substrate</name>
    </ligand>
</feature>
<feature type="binding site" evidence="1">
    <location>
        <position position="197"/>
    </location>
    <ligand>
        <name>substrate</name>
    </ligand>
</feature>
<feature type="binding site" evidence="1">
    <location>
        <begin position="215"/>
        <end position="216"/>
    </location>
    <ligand>
        <name>substrate</name>
    </ligand>
</feature>
<feature type="binding site" evidence="1">
    <location>
        <begin position="225"/>
        <end position="226"/>
    </location>
    <ligand>
        <name>substrate</name>
    </ligand>
</feature>
<feature type="site" description="Could be important to modulate the pK values of the two catalytic cysteine residues" evidence="1">
    <location>
        <position position="166"/>
    </location>
</feature>
<feature type="site" description="Could be important to modulate the pK values of the two catalytic cysteine residues" evidence="1">
    <location>
        <position position="215"/>
    </location>
</feature>
<reference key="1">
    <citation type="journal article" date="2001" name="DNA Res.">
        <title>Complete genomic sequence of the filamentous nitrogen-fixing cyanobacterium Anabaena sp. strain PCC 7120.</title>
        <authorList>
            <person name="Kaneko T."/>
            <person name="Nakamura Y."/>
            <person name="Wolk C.P."/>
            <person name="Kuritz T."/>
            <person name="Sasamoto S."/>
            <person name="Watanabe A."/>
            <person name="Iriguchi M."/>
            <person name="Ishikawa A."/>
            <person name="Kawashima K."/>
            <person name="Kimura T."/>
            <person name="Kishida Y."/>
            <person name="Kohara M."/>
            <person name="Matsumoto M."/>
            <person name="Matsuno A."/>
            <person name="Muraki A."/>
            <person name="Nakazaki N."/>
            <person name="Shimpo S."/>
            <person name="Sugimoto M."/>
            <person name="Takazawa M."/>
            <person name="Yamada M."/>
            <person name="Yasuda M."/>
            <person name="Tabata S."/>
        </authorList>
    </citation>
    <scope>NUCLEOTIDE SEQUENCE [LARGE SCALE GENOMIC DNA]</scope>
    <source>
        <strain>PCC 7120 / SAG 25.82 / UTEX 2576</strain>
    </source>
</reference>
<name>DAPF1_NOSS1</name>